<sequence length="244" mass="27755">MAEFNLAELNALPKSGQALSLAVVNGQLETLSAEQRVEWALEHLPGEFVLSSSFGIQAAVCLHLVTRIKPDIPVILTDTGYLFPETYQFIDQLADKLKLNLQVFRAEQSPAWQEARYGKLWEQGVEGIEKYNQINKVEPMNRALETLGGQTWFAGLRREQSGSRAHLPVLAVQRGVFKILPIIDWDNRKIYQYLTEHGLSYHPLWEQGYLSVGDTHTTQKWEPGMSEEETRFFGLKRECGLHEG</sequence>
<protein>
    <recommendedName>
        <fullName evidence="1">Phosphoadenosine 5'-phosphosulfate reductase</fullName>
        <shortName evidence="1">PAPS reductase</shortName>
        <ecNumber evidence="1">1.8.4.8</ecNumber>
    </recommendedName>
    <alternativeName>
        <fullName evidence="1">3'-phosphoadenylylsulfate reductase</fullName>
    </alternativeName>
    <alternativeName>
        <fullName evidence="1">PAPS reductase, thioredoxin dependent</fullName>
    </alternativeName>
    <alternativeName>
        <fullName evidence="1">PAPS sulfotransferase</fullName>
    </alternativeName>
    <alternativeName>
        <fullName evidence="1">PAdoPS reductase</fullName>
    </alternativeName>
</protein>
<organism>
    <name type="scientific">Serratia proteamaculans (strain 568)</name>
    <dbReference type="NCBI Taxonomy" id="399741"/>
    <lineage>
        <taxon>Bacteria</taxon>
        <taxon>Pseudomonadati</taxon>
        <taxon>Pseudomonadota</taxon>
        <taxon>Gammaproteobacteria</taxon>
        <taxon>Enterobacterales</taxon>
        <taxon>Yersiniaceae</taxon>
        <taxon>Serratia</taxon>
    </lineage>
</organism>
<reference key="1">
    <citation type="submission" date="2007-09" db="EMBL/GenBank/DDBJ databases">
        <title>Complete sequence of chromosome of Serratia proteamaculans 568.</title>
        <authorList>
            <consortium name="US DOE Joint Genome Institute"/>
            <person name="Copeland A."/>
            <person name="Lucas S."/>
            <person name="Lapidus A."/>
            <person name="Barry K."/>
            <person name="Glavina del Rio T."/>
            <person name="Dalin E."/>
            <person name="Tice H."/>
            <person name="Pitluck S."/>
            <person name="Chain P."/>
            <person name="Malfatti S."/>
            <person name="Shin M."/>
            <person name="Vergez L."/>
            <person name="Schmutz J."/>
            <person name="Larimer F."/>
            <person name="Land M."/>
            <person name="Hauser L."/>
            <person name="Kyrpides N."/>
            <person name="Kim E."/>
            <person name="Taghavi S."/>
            <person name="Newman L."/>
            <person name="Vangronsveld J."/>
            <person name="van der Lelie D."/>
            <person name="Richardson P."/>
        </authorList>
    </citation>
    <scope>NUCLEOTIDE SEQUENCE [LARGE SCALE GENOMIC DNA]</scope>
    <source>
        <strain>568</strain>
    </source>
</reference>
<evidence type="ECO:0000255" key="1">
    <source>
        <dbReference type="HAMAP-Rule" id="MF_00063"/>
    </source>
</evidence>
<feature type="chain" id="PRO_1000057433" description="Phosphoadenosine 5'-phosphosulfate reductase">
    <location>
        <begin position="1"/>
        <end position="244"/>
    </location>
</feature>
<feature type="active site" description="Nucleophile; cysteine thiosulfonate intermediate" evidence="1">
    <location>
        <position position="239"/>
    </location>
</feature>
<comment type="function">
    <text evidence="1">Catalyzes the formation of sulfite from phosphoadenosine 5'-phosphosulfate (PAPS) using thioredoxin as an electron donor.</text>
</comment>
<comment type="catalytic activity">
    <reaction evidence="1">
        <text>[thioredoxin]-disulfide + sulfite + adenosine 3',5'-bisphosphate + 2 H(+) = [thioredoxin]-dithiol + 3'-phosphoadenylyl sulfate</text>
        <dbReference type="Rhea" id="RHEA:11724"/>
        <dbReference type="Rhea" id="RHEA-COMP:10698"/>
        <dbReference type="Rhea" id="RHEA-COMP:10700"/>
        <dbReference type="ChEBI" id="CHEBI:15378"/>
        <dbReference type="ChEBI" id="CHEBI:17359"/>
        <dbReference type="ChEBI" id="CHEBI:29950"/>
        <dbReference type="ChEBI" id="CHEBI:50058"/>
        <dbReference type="ChEBI" id="CHEBI:58339"/>
        <dbReference type="ChEBI" id="CHEBI:58343"/>
        <dbReference type="EC" id="1.8.4.8"/>
    </reaction>
</comment>
<comment type="pathway">
    <text evidence="1">Sulfur metabolism; hydrogen sulfide biosynthesis; sulfite from sulfate: step 3/3.</text>
</comment>
<comment type="subcellular location">
    <subcellularLocation>
        <location evidence="1">Cytoplasm</location>
    </subcellularLocation>
</comment>
<comment type="similarity">
    <text evidence="1">Belongs to the PAPS reductase family. CysH subfamily.</text>
</comment>
<keyword id="KW-0963">Cytoplasm</keyword>
<keyword id="KW-0560">Oxidoreductase</keyword>
<name>CYSH_SERP5</name>
<dbReference type="EC" id="1.8.4.8" evidence="1"/>
<dbReference type="EMBL" id="CP000826">
    <property type="protein sequence ID" value="ABV39918.1"/>
    <property type="molecule type" value="Genomic_DNA"/>
</dbReference>
<dbReference type="SMR" id="A8G9X8"/>
<dbReference type="STRING" id="399741.Spro_0812"/>
<dbReference type="KEGG" id="spe:Spro_0812"/>
<dbReference type="eggNOG" id="COG0175">
    <property type="taxonomic scope" value="Bacteria"/>
</dbReference>
<dbReference type="HOGENOM" id="CLU_044089_3_0_6"/>
<dbReference type="OrthoDB" id="9794018at2"/>
<dbReference type="UniPathway" id="UPA00140">
    <property type="reaction ID" value="UER00206"/>
</dbReference>
<dbReference type="GO" id="GO:0005737">
    <property type="term" value="C:cytoplasm"/>
    <property type="evidence" value="ECO:0007669"/>
    <property type="project" value="UniProtKB-SubCell"/>
</dbReference>
<dbReference type="GO" id="GO:0004604">
    <property type="term" value="F:phosphoadenylyl-sulfate reductase (thioredoxin) activity"/>
    <property type="evidence" value="ECO:0007669"/>
    <property type="project" value="UniProtKB-UniRule"/>
</dbReference>
<dbReference type="GO" id="GO:0070814">
    <property type="term" value="P:hydrogen sulfide biosynthetic process"/>
    <property type="evidence" value="ECO:0007669"/>
    <property type="project" value="UniProtKB-UniRule"/>
</dbReference>
<dbReference type="GO" id="GO:0019379">
    <property type="term" value="P:sulfate assimilation, phosphoadenylyl sulfate reduction by phosphoadenylyl-sulfate reductase (thioredoxin)"/>
    <property type="evidence" value="ECO:0007669"/>
    <property type="project" value="UniProtKB-UniRule"/>
</dbReference>
<dbReference type="CDD" id="cd23945">
    <property type="entry name" value="PAPS_reductase"/>
    <property type="match status" value="1"/>
</dbReference>
<dbReference type="FunFam" id="3.40.50.620:FF:000043">
    <property type="entry name" value="Phosphoadenosine phosphosulfate reductase"/>
    <property type="match status" value="1"/>
</dbReference>
<dbReference type="Gene3D" id="3.40.50.620">
    <property type="entry name" value="HUPs"/>
    <property type="match status" value="1"/>
</dbReference>
<dbReference type="HAMAP" id="MF_00063">
    <property type="entry name" value="CysH"/>
    <property type="match status" value="1"/>
</dbReference>
<dbReference type="InterPro" id="IPR004511">
    <property type="entry name" value="PAPS/APS_Rdtase"/>
</dbReference>
<dbReference type="InterPro" id="IPR002500">
    <property type="entry name" value="PAPS_reduct_dom"/>
</dbReference>
<dbReference type="InterPro" id="IPR011800">
    <property type="entry name" value="PAPS_reductase_CysH"/>
</dbReference>
<dbReference type="InterPro" id="IPR014729">
    <property type="entry name" value="Rossmann-like_a/b/a_fold"/>
</dbReference>
<dbReference type="NCBIfam" id="TIGR00434">
    <property type="entry name" value="cysH"/>
    <property type="match status" value="1"/>
</dbReference>
<dbReference type="NCBIfam" id="TIGR02057">
    <property type="entry name" value="PAPS_reductase"/>
    <property type="match status" value="1"/>
</dbReference>
<dbReference type="NCBIfam" id="NF002537">
    <property type="entry name" value="PRK02090.1"/>
    <property type="match status" value="1"/>
</dbReference>
<dbReference type="PANTHER" id="PTHR46509">
    <property type="entry name" value="PHOSPHOADENOSINE PHOSPHOSULFATE REDUCTASE"/>
    <property type="match status" value="1"/>
</dbReference>
<dbReference type="PANTHER" id="PTHR46509:SF1">
    <property type="entry name" value="PHOSPHOADENOSINE PHOSPHOSULFATE REDUCTASE"/>
    <property type="match status" value="1"/>
</dbReference>
<dbReference type="Pfam" id="PF01507">
    <property type="entry name" value="PAPS_reduct"/>
    <property type="match status" value="1"/>
</dbReference>
<dbReference type="PIRSF" id="PIRSF000857">
    <property type="entry name" value="PAPS_reductase"/>
    <property type="match status" value="1"/>
</dbReference>
<dbReference type="SUPFAM" id="SSF52402">
    <property type="entry name" value="Adenine nucleotide alpha hydrolases-like"/>
    <property type="match status" value="1"/>
</dbReference>
<gene>
    <name evidence="1" type="primary">cysH</name>
    <name type="ordered locus">Spro_0812</name>
</gene>
<accession>A8G9X8</accession>
<proteinExistence type="inferred from homology"/>